<evidence type="ECO:0000255" key="1">
    <source>
        <dbReference type="HAMAP-Rule" id="MF_00437"/>
    </source>
</evidence>
<evidence type="ECO:0000305" key="2"/>
<organism>
    <name type="scientific">Euglena gracilis</name>
    <dbReference type="NCBI Taxonomy" id="3039"/>
    <lineage>
        <taxon>Eukaryota</taxon>
        <taxon>Discoba</taxon>
        <taxon>Euglenozoa</taxon>
        <taxon>Euglenida</taxon>
        <taxon>Spirocuta</taxon>
        <taxon>Euglenophyceae</taxon>
        <taxon>Euglenales</taxon>
        <taxon>Euglenaceae</taxon>
        <taxon>Euglena</taxon>
    </lineage>
</organism>
<sequence length="198" mass="22656">MTLSKNENIKAKQKQINLPKILRQEIKENNKIIKWFYNIVMLLGGIGFLIVGISSYIGNNLIYFLDASEIIFFPQGITMCFYGTCGILFSINQISIILNGVGEGYNEFNKELNLMTIYRKGKQGKNSDINITYSLKDIEGIRIEIKNEYFNVKQNVFLRIKDKNDLPIIQLSNPIKISDLEKQASEIASFLNVPIKGY</sequence>
<dbReference type="EMBL" id="Z11874">
    <property type="protein sequence ID" value="CAA77903.1"/>
    <property type="status" value="ALT_INIT"/>
    <property type="molecule type" value="Genomic_DNA"/>
</dbReference>
<dbReference type="EMBL" id="X06254">
    <property type="protein sequence ID" value="CAA29600.1"/>
    <property type="status" value="ALT_INIT"/>
    <property type="molecule type" value="Genomic_DNA"/>
</dbReference>
<dbReference type="EMBL" id="X70810">
    <property type="protein sequence ID" value="CAA50086.1"/>
    <property type="status" value="ALT_INIT"/>
    <property type="molecule type" value="Genomic_DNA"/>
</dbReference>
<dbReference type="PIR" id="S01049">
    <property type="entry name" value="S01049"/>
</dbReference>
<dbReference type="RefSeq" id="NP_041899.1">
    <property type="nucleotide sequence ID" value="NC_001603.2"/>
</dbReference>
<dbReference type="GeneID" id="807492"/>
<dbReference type="GO" id="GO:0009535">
    <property type="term" value="C:chloroplast thylakoid membrane"/>
    <property type="evidence" value="ECO:0007669"/>
    <property type="project" value="UniProtKB-SubCell"/>
</dbReference>
<dbReference type="GO" id="GO:0009522">
    <property type="term" value="C:photosystem I"/>
    <property type="evidence" value="ECO:0007669"/>
    <property type="project" value="InterPro"/>
</dbReference>
<dbReference type="GO" id="GO:0015979">
    <property type="term" value="P:photosynthesis"/>
    <property type="evidence" value="ECO:0007669"/>
    <property type="project" value="UniProtKB-UniRule"/>
</dbReference>
<dbReference type="HAMAP" id="MF_00437">
    <property type="entry name" value="Ycf4"/>
    <property type="match status" value="1"/>
</dbReference>
<dbReference type="InterPro" id="IPR003359">
    <property type="entry name" value="PSI_Ycf4_assembly"/>
</dbReference>
<dbReference type="Pfam" id="PF02392">
    <property type="entry name" value="Ycf4"/>
    <property type="match status" value="1"/>
</dbReference>
<proteinExistence type="inferred from homology"/>
<reference key="1">
    <citation type="journal article" date="1987" name="Nucleic Acids Res.">
        <title>Euglena gracilis chloroplast DNA: the untranslated leader of tufA-ORF206 gene contains an intron.</title>
        <authorList>
            <person name="Montandon P.-E."/>
            <person name="Knuchel-Aegerter C."/>
            <person name="Stutz E."/>
        </authorList>
    </citation>
    <scope>NUCLEOTIDE SEQUENCE [GENOMIC DNA]</scope>
    <source>
        <strain>Z / UTEX 753</strain>
    </source>
</reference>
<reference key="2">
    <citation type="journal article" date="1993" name="Nucleic Acids Res.">
        <title>Complete sequence of Euglena gracilis chloroplast DNA.</title>
        <authorList>
            <person name="Hallick R.B."/>
            <person name="Hong L."/>
            <person name="Drager R.G."/>
            <person name="Favreau M.R."/>
            <person name="Monfort A."/>
            <person name="Orsat B."/>
            <person name="Spielmann A."/>
            <person name="Stutz E."/>
        </authorList>
    </citation>
    <scope>NUCLEOTIDE SEQUENCE [LARGE SCALE GENOMIC DNA]</scope>
    <source>
        <strain>Z / UTEX 753</strain>
    </source>
</reference>
<accession>P09362</accession>
<name>YCF4_EUGGR</name>
<protein>
    <recommendedName>
        <fullName evidence="1">Photosystem I assembly protein Ycf4</fullName>
    </recommendedName>
</protein>
<comment type="function">
    <text evidence="1">Seems to be required for the assembly of the photosystem I complex.</text>
</comment>
<comment type="subcellular location">
    <subcellularLocation>
        <location evidence="1">Plastid</location>
        <location evidence="1">Chloroplast thylakoid membrane</location>
        <topology evidence="1">Multi-pass membrane protein</topology>
    </subcellularLocation>
</comment>
<comment type="similarity">
    <text evidence="1">Belongs to the Ycf4 family.</text>
</comment>
<comment type="sequence caution" evidence="2">
    <conflict type="erroneous initiation">
        <sequence resource="EMBL-CDS" id="CAA29600"/>
    </conflict>
</comment>
<comment type="sequence caution" evidence="2">
    <conflict type="erroneous initiation">
        <sequence resource="EMBL-CDS" id="CAA50086"/>
    </conflict>
</comment>
<comment type="sequence caution" evidence="2">
    <conflict type="erroneous initiation">
        <sequence resource="EMBL-CDS" id="CAA77903"/>
    </conflict>
</comment>
<feature type="chain" id="PRO_0000217605" description="Photosystem I assembly protein Ycf4">
    <location>
        <begin position="1"/>
        <end position="198"/>
    </location>
</feature>
<feature type="transmembrane region" description="Helical" evidence="1">
    <location>
        <begin position="35"/>
        <end position="57"/>
    </location>
</feature>
<feature type="transmembrane region" description="Helical" evidence="1">
    <location>
        <begin position="70"/>
        <end position="92"/>
    </location>
</feature>
<geneLocation type="chloroplast"/>
<keyword id="KW-0150">Chloroplast</keyword>
<keyword id="KW-0472">Membrane</keyword>
<keyword id="KW-0602">Photosynthesis</keyword>
<keyword id="KW-0934">Plastid</keyword>
<keyword id="KW-0793">Thylakoid</keyword>
<keyword id="KW-0812">Transmembrane</keyword>
<keyword id="KW-1133">Transmembrane helix</keyword>
<gene>
    <name evidence="1" type="primary">ycf4</name>
</gene>